<sequence>MAQAVDASKNLPSDPRNREVVFPAGRDPQWGNLETPVNASPLVKWFINNLPAYRPGLTPFRRGLEVGMAHGYFLFGPFAKLGPLRDAANANLAGLLGAIGLVVLFTLSLSLYANSNPPKALASVTVPNPPDAFQSKEGWNNFASAFLIGGIGGAVVAYFLTSNFALIQGLVG</sequence>
<evidence type="ECO:0000255" key="1"/>
<evidence type="ECO:0000256" key="2">
    <source>
        <dbReference type="SAM" id="MobiDB-lite"/>
    </source>
</evidence>
<evidence type="ECO:0000305" key="3"/>
<organism>
    <name type="scientific">Trichormus variabilis (strain ATCC 29413 / PCC 7937)</name>
    <name type="common">Anabaena variabilis</name>
    <dbReference type="NCBI Taxonomy" id="240292"/>
    <lineage>
        <taxon>Bacteria</taxon>
        <taxon>Bacillati</taxon>
        <taxon>Cyanobacteriota</taxon>
        <taxon>Cyanophyceae</taxon>
        <taxon>Nostocales</taxon>
        <taxon>Nostocaceae</taxon>
        <taxon>Trichormus</taxon>
    </lineage>
</organism>
<comment type="subcellular location">
    <subcellularLocation>
        <location evidence="3">Cellular thylakoid membrane</location>
        <topology evidence="3">Multi-pass membrane protein</topology>
    </subcellularLocation>
</comment>
<comment type="similarity">
    <text evidence="3">Belongs to the PsaL family.</text>
</comment>
<protein>
    <recommendedName>
        <fullName>Photosystem I reaction center subunit XI</fullName>
    </recommendedName>
    <alternativeName>
        <fullName>PSI subunit V</fullName>
    </alternativeName>
    <alternativeName>
        <fullName>PSI-L</fullName>
    </alternativeName>
</protein>
<reference key="1">
    <citation type="journal article" date="2014" name="Stand. Genomic Sci.">
        <title>Complete genome sequence of Anabaena variabilis ATCC 29413.</title>
        <authorList>
            <person name="Thiel T."/>
            <person name="Pratte B.S."/>
            <person name="Zhong J."/>
            <person name="Goodwin L."/>
            <person name="Copeland A."/>
            <person name="Lucas S."/>
            <person name="Han C."/>
            <person name="Pitluck S."/>
            <person name="Land M.L."/>
            <person name="Kyrpides N.C."/>
            <person name="Woyke T."/>
        </authorList>
    </citation>
    <scope>NUCLEOTIDE SEQUENCE [LARGE SCALE GENOMIC DNA]</scope>
    <source>
        <strain>ATCC 29413 / PCC 7937</strain>
    </source>
</reference>
<reference key="2">
    <citation type="journal article" date="1992" name="J. Biol. Chem.">
        <title>Purification and characterization of the photosystem I complex from the filamentous cyanobacterium Anabaena variabilis ATCC 29413.</title>
        <authorList>
            <person name="Nyhus K.J."/>
            <person name="Ikeuchi M."/>
            <person name="Inoue Y."/>
            <person name="Whitmarsh J."/>
            <person name="Pakrasi H.B."/>
        </authorList>
    </citation>
    <scope>PROTEIN SEQUENCE OF 10-57 AND 66-83</scope>
</reference>
<accession>P31092</accession>
<accession>Q3MD37</accession>
<gene>
    <name type="primary">psaL</name>
    <name type="ordered locus">Ava_1476</name>
</gene>
<feature type="chain" id="PRO_0000194695" description="Photosystem I reaction center subunit XI">
    <location>
        <begin position="1"/>
        <end position="172"/>
    </location>
</feature>
<feature type="transmembrane region" description="Helical" evidence="1">
    <location>
        <begin position="92"/>
        <end position="112"/>
    </location>
</feature>
<feature type="transmembrane region" description="Helical" evidence="1">
    <location>
        <begin position="147"/>
        <end position="167"/>
    </location>
</feature>
<feature type="region of interest" description="Disordered" evidence="2">
    <location>
        <begin position="1"/>
        <end position="24"/>
    </location>
</feature>
<feature type="sequence conflict" description="In Ref. 2; AA sequence." evidence="3" ref="2">
    <original>WFI</original>
    <variation>KFF</variation>
    <location>
        <begin position="45"/>
        <end position="47"/>
    </location>
</feature>
<feature type="sequence conflict" description="In Ref. 2; AA sequence." evidence="3" ref="2">
    <original>P</original>
    <variation>T</variation>
    <location>
        <position position="51"/>
    </location>
</feature>
<feature type="sequence conflict" description="In Ref. 2; AA sequence." evidence="3" ref="2">
    <location>
        <position position="81"/>
    </location>
</feature>
<name>PSAL_TRIV2</name>
<keyword id="KW-0903">Direct protein sequencing</keyword>
<keyword id="KW-0472">Membrane</keyword>
<keyword id="KW-0602">Photosynthesis</keyword>
<keyword id="KW-0603">Photosystem I</keyword>
<keyword id="KW-0793">Thylakoid</keyword>
<keyword id="KW-0812">Transmembrane</keyword>
<keyword id="KW-1133">Transmembrane helix</keyword>
<proteinExistence type="evidence at protein level"/>
<dbReference type="EMBL" id="CP000117">
    <property type="protein sequence ID" value="ABA21099.1"/>
    <property type="molecule type" value="Genomic_DNA"/>
</dbReference>
<dbReference type="SMR" id="P31092"/>
<dbReference type="STRING" id="240292.Ava_1476"/>
<dbReference type="KEGG" id="ava:Ava_1476"/>
<dbReference type="eggNOG" id="ENOG502ZMJ2">
    <property type="taxonomic scope" value="Bacteria"/>
</dbReference>
<dbReference type="HOGENOM" id="CLU_092204_1_0_3"/>
<dbReference type="Proteomes" id="UP000002533">
    <property type="component" value="Chromosome"/>
</dbReference>
<dbReference type="GO" id="GO:0009538">
    <property type="term" value="C:photosystem I reaction center"/>
    <property type="evidence" value="ECO:0007669"/>
    <property type="project" value="InterPro"/>
</dbReference>
<dbReference type="GO" id="GO:0031676">
    <property type="term" value="C:plasma membrane-derived thylakoid membrane"/>
    <property type="evidence" value="ECO:0007669"/>
    <property type="project" value="UniProtKB-SubCell"/>
</dbReference>
<dbReference type="GO" id="GO:0015979">
    <property type="term" value="P:photosynthesis"/>
    <property type="evidence" value="ECO:0007669"/>
    <property type="project" value="UniProtKB-UniRule"/>
</dbReference>
<dbReference type="Gene3D" id="1.20.1240.10">
    <property type="entry name" value="Photosystem I PsaL, reaction centre subunit XI"/>
    <property type="match status" value="1"/>
</dbReference>
<dbReference type="HAMAP" id="MF_00447">
    <property type="entry name" value="PSI_PsaL"/>
    <property type="match status" value="1"/>
</dbReference>
<dbReference type="InterPro" id="IPR003757">
    <property type="entry name" value="PSI_PsaL"/>
</dbReference>
<dbReference type="InterPro" id="IPR036592">
    <property type="entry name" value="PSI_PsaL_sf"/>
</dbReference>
<dbReference type="InterPro" id="IPR022980">
    <property type="entry name" value="PSI_suXI"/>
</dbReference>
<dbReference type="NCBIfam" id="NF001927">
    <property type="entry name" value="PRK00704.1-4"/>
    <property type="match status" value="1"/>
</dbReference>
<dbReference type="PANTHER" id="PTHR34803">
    <property type="entry name" value="PHOTOSYSTEM I REACTION CENTER SUBUNIT XI, CHLOROPLASTIC"/>
    <property type="match status" value="1"/>
</dbReference>
<dbReference type="PANTHER" id="PTHR34803:SF2">
    <property type="entry name" value="PHOTOSYSTEM I REACTION CENTER SUBUNIT XI, CHLOROPLASTIC"/>
    <property type="match status" value="1"/>
</dbReference>
<dbReference type="Pfam" id="PF02605">
    <property type="entry name" value="PsaL"/>
    <property type="match status" value="1"/>
</dbReference>
<dbReference type="SUPFAM" id="SSF81568">
    <property type="entry name" value="Photosystem I reaction center subunit XI, PsaL"/>
    <property type="match status" value="1"/>
</dbReference>